<organism>
    <name type="scientific">Chara vulgaris</name>
    <name type="common">Common stonewort</name>
    <dbReference type="NCBI Taxonomy" id="55564"/>
    <lineage>
        <taxon>Eukaryota</taxon>
        <taxon>Viridiplantae</taxon>
        <taxon>Streptophyta</taxon>
        <taxon>Charophyceae</taxon>
        <taxon>Charales</taxon>
        <taxon>Characeae</taxon>
        <taxon>Chara</taxon>
    </lineage>
</organism>
<dbReference type="EMBL" id="DQ229107">
    <property type="protein sequence ID" value="ABA61946.1"/>
    <property type="molecule type" value="Genomic_DNA"/>
</dbReference>
<dbReference type="RefSeq" id="YP_635791.1">
    <property type="nucleotide sequence ID" value="NC_008097.1"/>
</dbReference>
<dbReference type="SMR" id="Q1ACF6"/>
<dbReference type="GeneID" id="4100312"/>
<dbReference type="GO" id="GO:0009507">
    <property type="term" value="C:chloroplast"/>
    <property type="evidence" value="ECO:0007669"/>
    <property type="project" value="UniProtKB-SubCell"/>
</dbReference>
<dbReference type="GO" id="GO:0005762">
    <property type="term" value="C:mitochondrial large ribosomal subunit"/>
    <property type="evidence" value="ECO:0007669"/>
    <property type="project" value="TreeGrafter"/>
</dbReference>
<dbReference type="GO" id="GO:0019843">
    <property type="term" value="F:rRNA binding"/>
    <property type="evidence" value="ECO:0007669"/>
    <property type="project" value="UniProtKB-UniRule"/>
</dbReference>
<dbReference type="GO" id="GO:0003735">
    <property type="term" value="F:structural constituent of ribosome"/>
    <property type="evidence" value="ECO:0007669"/>
    <property type="project" value="InterPro"/>
</dbReference>
<dbReference type="GO" id="GO:0016740">
    <property type="term" value="F:transferase activity"/>
    <property type="evidence" value="ECO:0007669"/>
    <property type="project" value="InterPro"/>
</dbReference>
<dbReference type="GO" id="GO:0032543">
    <property type="term" value="P:mitochondrial translation"/>
    <property type="evidence" value="ECO:0007669"/>
    <property type="project" value="TreeGrafter"/>
</dbReference>
<dbReference type="FunFam" id="2.30.30.30:FF:000001">
    <property type="entry name" value="50S ribosomal protein L2"/>
    <property type="match status" value="1"/>
</dbReference>
<dbReference type="FunFam" id="2.40.50.140:FF:000003">
    <property type="entry name" value="50S ribosomal protein L2"/>
    <property type="match status" value="1"/>
</dbReference>
<dbReference type="FunFam" id="4.10.950.10:FF:000001">
    <property type="entry name" value="50S ribosomal protein L2"/>
    <property type="match status" value="1"/>
</dbReference>
<dbReference type="Gene3D" id="2.30.30.30">
    <property type="match status" value="1"/>
</dbReference>
<dbReference type="Gene3D" id="2.40.50.140">
    <property type="entry name" value="Nucleic acid-binding proteins"/>
    <property type="match status" value="1"/>
</dbReference>
<dbReference type="Gene3D" id="4.10.950.10">
    <property type="entry name" value="Ribosomal protein L2, domain 3"/>
    <property type="match status" value="1"/>
</dbReference>
<dbReference type="HAMAP" id="MF_01320_B">
    <property type="entry name" value="Ribosomal_uL2_B"/>
    <property type="match status" value="1"/>
</dbReference>
<dbReference type="InterPro" id="IPR012340">
    <property type="entry name" value="NA-bd_OB-fold"/>
</dbReference>
<dbReference type="InterPro" id="IPR014722">
    <property type="entry name" value="Rib_uL2_dom2"/>
</dbReference>
<dbReference type="InterPro" id="IPR002171">
    <property type="entry name" value="Ribosomal_uL2"/>
</dbReference>
<dbReference type="InterPro" id="IPR005880">
    <property type="entry name" value="Ribosomal_uL2_bac/org-type"/>
</dbReference>
<dbReference type="InterPro" id="IPR022669">
    <property type="entry name" value="Ribosomal_uL2_C"/>
</dbReference>
<dbReference type="InterPro" id="IPR022671">
    <property type="entry name" value="Ribosomal_uL2_CS"/>
</dbReference>
<dbReference type="InterPro" id="IPR014726">
    <property type="entry name" value="Ribosomal_uL2_dom3"/>
</dbReference>
<dbReference type="InterPro" id="IPR022666">
    <property type="entry name" value="Ribosomal_uL2_RNA-bd_dom"/>
</dbReference>
<dbReference type="InterPro" id="IPR008991">
    <property type="entry name" value="Translation_prot_SH3-like_sf"/>
</dbReference>
<dbReference type="NCBIfam" id="TIGR01171">
    <property type="entry name" value="rplB_bact"/>
    <property type="match status" value="1"/>
</dbReference>
<dbReference type="PANTHER" id="PTHR13691:SF5">
    <property type="entry name" value="LARGE RIBOSOMAL SUBUNIT PROTEIN UL2M"/>
    <property type="match status" value="1"/>
</dbReference>
<dbReference type="PANTHER" id="PTHR13691">
    <property type="entry name" value="RIBOSOMAL PROTEIN L2"/>
    <property type="match status" value="1"/>
</dbReference>
<dbReference type="Pfam" id="PF00181">
    <property type="entry name" value="Ribosomal_L2"/>
    <property type="match status" value="1"/>
</dbReference>
<dbReference type="Pfam" id="PF03947">
    <property type="entry name" value="Ribosomal_L2_C"/>
    <property type="match status" value="1"/>
</dbReference>
<dbReference type="PIRSF" id="PIRSF002158">
    <property type="entry name" value="Ribosomal_L2"/>
    <property type="match status" value="1"/>
</dbReference>
<dbReference type="SMART" id="SM01383">
    <property type="entry name" value="Ribosomal_L2"/>
    <property type="match status" value="1"/>
</dbReference>
<dbReference type="SMART" id="SM01382">
    <property type="entry name" value="Ribosomal_L2_C"/>
    <property type="match status" value="1"/>
</dbReference>
<dbReference type="SUPFAM" id="SSF50249">
    <property type="entry name" value="Nucleic acid-binding proteins"/>
    <property type="match status" value="1"/>
</dbReference>
<dbReference type="SUPFAM" id="SSF50104">
    <property type="entry name" value="Translation proteins SH3-like domain"/>
    <property type="match status" value="1"/>
</dbReference>
<dbReference type="PROSITE" id="PS00467">
    <property type="entry name" value="RIBOSOMAL_L2"/>
    <property type="match status" value="1"/>
</dbReference>
<protein>
    <recommendedName>
        <fullName evidence="2">Large ribosomal subunit protein uL2c</fullName>
    </recommendedName>
    <alternativeName>
        <fullName evidence="4">50S ribosomal protein L2, chloroplastic</fullName>
    </alternativeName>
</protein>
<reference key="1">
    <citation type="journal article" date="2006" name="Mol. Biol. Evol.">
        <title>The chloroplast genome sequence of Chara vulgaris sheds new light into the closest green algal relatives of land plants.</title>
        <authorList>
            <person name="Turmel M."/>
            <person name="Otis C."/>
            <person name="Lemieux C."/>
        </authorList>
    </citation>
    <scope>NUCLEOTIDE SEQUENCE [LARGE SCALE GENOMIC DNA]</scope>
</reference>
<accession>Q1ACF6</accession>
<comment type="subunit">
    <text evidence="1">Part of the 50S ribosomal subunit.</text>
</comment>
<comment type="subcellular location">
    <subcellularLocation>
        <location>Plastid</location>
        <location>Chloroplast</location>
    </subcellularLocation>
</comment>
<comment type="similarity">
    <text evidence="4">Belongs to the universal ribosomal protein uL2 family.</text>
</comment>
<evidence type="ECO:0000250" key="1"/>
<evidence type="ECO:0000255" key="2">
    <source>
        <dbReference type="HAMAP-Rule" id="MF_01320"/>
    </source>
</evidence>
<evidence type="ECO:0000256" key="3">
    <source>
        <dbReference type="SAM" id="MobiDB-lite"/>
    </source>
</evidence>
<evidence type="ECO:0000305" key="4"/>
<keyword id="KW-0150">Chloroplast</keyword>
<keyword id="KW-0934">Plastid</keyword>
<keyword id="KW-0687">Ribonucleoprotein</keyword>
<keyword id="KW-0689">Ribosomal protein</keyword>
<geneLocation type="chloroplast"/>
<sequence>MGIRIYKAYTPGTRNRSVSDYKNISCLKPEKSLTSGKMSKKGRNNQGIITSRHRGGGHKRLYRKIDFRRKKIGIYGIVKTIEYDPNRNSHICLVNYEDGEKRYILYPRGIKIGDTILSSMDASIFVGNTLPLTQIPLGTAIHNIELQPGKGGQLVRAAGTVAQVVAKEGKWTSIRLPSGEVRLIYQKCLATIGQVGNPEFNNQSIGKAGSKRWQGKRPKVRGTAMNPVDHPHGGGEGRTSIGRKRPLTPWGYPTIGKKTRSKNKYSNIFVIRKRKLNS</sequence>
<name>RK2_CHAVU</name>
<feature type="chain" id="PRO_0000277083" description="Large ribosomal subunit protein uL2c">
    <location>
        <begin position="1"/>
        <end position="278"/>
    </location>
</feature>
<feature type="region of interest" description="Disordered" evidence="3">
    <location>
        <begin position="32"/>
        <end position="56"/>
    </location>
</feature>
<feature type="region of interest" description="Disordered" evidence="3">
    <location>
        <begin position="203"/>
        <end position="256"/>
    </location>
</feature>
<feature type="compositionally biased region" description="Basic residues" evidence="3">
    <location>
        <begin position="209"/>
        <end position="220"/>
    </location>
</feature>
<gene>
    <name type="primary">rpl2</name>
</gene>
<proteinExistence type="inferred from homology"/>